<sequence>MAAESGKIDPMHQFEVTPLGGGFNLGGQEVLFTNSALWMVVAAITLGLFMWGGMRRQLVPGRWQVAVEGFTGFISSMMMANIGTEGRKYTPYVFSLFMFILFCNLLGMLPLGVLGLHPFTVTSHIAITGVLALISFAIVLVVGFWRHGLHFFSLFVPHGTPLPMIPIIAPIEFVSFMVRPFSLGLRLFVAMTAGHVLLKVLSGFVINGFNAETLWLGSIVSVLSFTLMIGISALELLVAGIQAYVFALLTSLYINDAVNLH</sequence>
<comment type="function">
    <text evidence="1">Key component of the proton channel; it plays a direct role in the translocation of protons across the membrane.</text>
</comment>
<comment type="subunit">
    <text evidence="1">F-type ATPases have 2 components, CF(1) - the catalytic core - and CF(0) - the membrane proton channel. CF(1) has five subunits: alpha(3), beta(3), gamma(1), delta(1), epsilon(1). CF(0) has three main subunits: a(1), b(2) and c(9-12). The alpha and beta chains form an alternating ring which encloses part of the gamma chain. CF(1) is attached to CF(0) by a central stalk formed by the gamma and epsilon chains, while a peripheral stalk is formed by the delta and b chains.</text>
</comment>
<comment type="subcellular location">
    <subcellularLocation>
        <location evidence="1">Cell inner membrane</location>
        <topology evidence="1">Multi-pass membrane protein</topology>
    </subcellularLocation>
</comment>
<comment type="similarity">
    <text evidence="1">Belongs to the ATPase A chain family.</text>
</comment>
<protein>
    <recommendedName>
        <fullName evidence="1">ATP synthase subunit a</fullName>
    </recommendedName>
    <alternativeName>
        <fullName evidence="1">ATP synthase F0 sector subunit a</fullName>
    </alternativeName>
    <alternativeName>
        <fullName evidence="1">F-ATPase subunit 6</fullName>
    </alternativeName>
</protein>
<accession>Q1GU79</accession>
<name>ATP6_SPHAL</name>
<gene>
    <name evidence="1" type="primary">atpB</name>
    <name type="ordered locus">Sala_1076</name>
</gene>
<proteinExistence type="inferred from homology"/>
<reference key="1">
    <citation type="journal article" date="2009" name="Proc. Natl. Acad. Sci. U.S.A.">
        <title>The genomic basis of trophic strategy in marine bacteria.</title>
        <authorList>
            <person name="Lauro F.M."/>
            <person name="McDougald D."/>
            <person name="Thomas T."/>
            <person name="Williams T.J."/>
            <person name="Egan S."/>
            <person name="Rice S."/>
            <person name="DeMaere M.Z."/>
            <person name="Ting L."/>
            <person name="Ertan H."/>
            <person name="Johnson J."/>
            <person name="Ferriera S."/>
            <person name="Lapidus A."/>
            <person name="Anderson I."/>
            <person name="Kyrpides N."/>
            <person name="Munk A.C."/>
            <person name="Detter C."/>
            <person name="Han C.S."/>
            <person name="Brown M.V."/>
            <person name="Robb F.T."/>
            <person name="Kjelleberg S."/>
            <person name="Cavicchioli R."/>
        </authorList>
    </citation>
    <scope>NUCLEOTIDE SEQUENCE [LARGE SCALE GENOMIC DNA]</scope>
    <source>
        <strain>DSM 13593 / LMG 18877 / RB2256</strain>
    </source>
</reference>
<keyword id="KW-0066">ATP synthesis</keyword>
<keyword id="KW-0997">Cell inner membrane</keyword>
<keyword id="KW-1003">Cell membrane</keyword>
<keyword id="KW-0138">CF(0)</keyword>
<keyword id="KW-0375">Hydrogen ion transport</keyword>
<keyword id="KW-0406">Ion transport</keyword>
<keyword id="KW-0472">Membrane</keyword>
<keyword id="KW-1185">Reference proteome</keyword>
<keyword id="KW-0812">Transmembrane</keyword>
<keyword id="KW-1133">Transmembrane helix</keyword>
<keyword id="KW-0813">Transport</keyword>
<evidence type="ECO:0000255" key="1">
    <source>
        <dbReference type="HAMAP-Rule" id="MF_01393"/>
    </source>
</evidence>
<organism>
    <name type="scientific">Sphingopyxis alaskensis (strain DSM 13593 / LMG 18877 / RB2256)</name>
    <name type="common">Sphingomonas alaskensis</name>
    <dbReference type="NCBI Taxonomy" id="317655"/>
    <lineage>
        <taxon>Bacteria</taxon>
        <taxon>Pseudomonadati</taxon>
        <taxon>Pseudomonadota</taxon>
        <taxon>Alphaproteobacteria</taxon>
        <taxon>Sphingomonadales</taxon>
        <taxon>Sphingomonadaceae</taxon>
        <taxon>Sphingopyxis</taxon>
    </lineage>
</organism>
<feature type="chain" id="PRO_0000362474" description="ATP synthase subunit a">
    <location>
        <begin position="1"/>
        <end position="261"/>
    </location>
</feature>
<feature type="transmembrane region" description="Helical" evidence="1">
    <location>
        <begin position="30"/>
        <end position="50"/>
    </location>
</feature>
<feature type="transmembrane region" description="Helical" evidence="1">
    <location>
        <begin position="63"/>
        <end position="83"/>
    </location>
</feature>
<feature type="transmembrane region" description="Helical" evidence="1">
    <location>
        <begin position="96"/>
        <end position="116"/>
    </location>
</feature>
<feature type="transmembrane region" description="Helical" evidence="1">
    <location>
        <begin position="125"/>
        <end position="145"/>
    </location>
</feature>
<feature type="transmembrane region" description="Helical" evidence="1">
    <location>
        <begin position="151"/>
        <end position="171"/>
    </location>
</feature>
<feature type="transmembrane region" description="Helical" evidence="1">
    <location>
        <begin position="187"/>
        <end position="207"/>
    </location>
</feature>
<feature type="transmembrane region" description="Helical" evidence="1">
    <location>
        <begin position="214"/>
        <end position="234"/>
    </location>
</feature>
<feature type="transmembrane region" description="Helical" evidence="1">
    <location>
        <begin position="235"/>
        <end position="255"/>
    </location>
</feature>
<dbReference type="EMBL" id="CP000356">
    <property type="protein sequence ID" value="ABF52793.1"/>
    <property type="molecule type" value="Genomic_DNA"/>
</dbReference>
<dbReference type="RefSeq" id="WP_011541379.1">
    <property type="nucleotide sequence ID" value="NC_008048.1"/>
</dbReference>
<dbReference type="SMR" id="Q1GU79"/>
<dbReference type="STRING" id="317655.Sala_1076"/>
<dbReference type="KEGG" id="sal:Sala_1076"/>
<dbReference type="eggNOG" id="COG0356">
    <property type="taxonomic scope" value="Bacteria"/>
</dbReference>
<dbReference type="HOGENOM" id="CLU_041018_0_2_5"/>
<dbReference type="OrthoDB" id="9809130at2"/>
<dbReference type="Proteomes" id="UP000006578">
    <property type="component" value="Chromosome"/>
</dbReference>
<dbReference type="GO" id="GO:0005886">
    <property type="term" value="C:plasma membrane"/>
    <property type="evidence" value="ECO:0007669"/>
    <property type="project" value="UniProtKB-SubCell"/>
</dbReference>
<dbReference type="GO" id="GO:0045259">
    <property type="term" value="C:proton-transporting ATP synthase complex"/>
    <property type="evidence" value="ECO:0007669"/>
    <property type="project" value="UniProtKB-KW"/>
</dbReference>
<dbReference type="GO" id="GO:0046933">
    <property type="term" value="F:proton-transporting ATP synthase activity, rotational mechanism"/>
    <property type="evidence" value="ECO:0007669"/>
    <property type="project" value="UniProtKB-UniRule"/>
</dbReference>
<dbReference type="CDD" id="cd00310">
    <property type="entry name" value="ATP-synt_Fo_a_6"/>
    <property type="match status" value="1"/>
</dbReference>
<dbReference type="Gene3D" id="1.20.120.220">
    <property type="entry name" value="ATP synthase, F0 complex, subunit A"/>
    <property type="match status" value="1"/>
</dbReference>
<dbReference type="HAMAP" id="MF_01393">
    <property type="entry name" value="ATP_synth_a_bact"/>
    <property type="match status" value="1"/>
</dbReference>
<dbReference type="InterPro" id="IPR000568">
    <property type="entry name" value="ATP_synth_F0_asu"/>
</dbReference>
<dbReference type="InterPro" id="IPR045083">
    <property type="entry name" value="ATP_synth_F0_asu_bact/mt"/>
</dbReference>
<dbReference type="InterPro" id="IPR035908">
    <property type="entry name" value="F0_ATP_A_sf"/>
</dbReference>
<dbReference type="NCBIfam" id="TIGR01131">
    <property type="entry name" value="ATP_synt_6_or_A"/>
    <property type="match status" value="1"/>
</dbReference>
<dbReference type="NCBIfam" id="NF004482">
    <property type="entry name" value="PRK05815.2-4"/>
    <property type="match status" value="1"/>
</dbReference>
<dbReference type="PANTHER" id="PTHR11410">
    <property type="entry name" value="ATP SYNTHASE SUBUNIT A"/>
    <property type="match status" value="1"/>
</dbReference>
<dbReference type="PANTHER" id="PTHR11410:SF0">
    <property type="entry name" value="ATP SYNTHASE SUBUNIT A"/>
    <property type="match status" value="1"/>
</dbReference>
<dbReference type="Pfam" id="PF00119">
    <property type="entry name" value="ATP-synt_A"/>
    <property type="match status" value="1"/>
</dbReference>
<dbReference type="PRINTS" id="PR00123">
    <property type="entry name" value="ATPASEA"/>
</dbReference>
<dbReference type="SUPFAM" id="SSF81336">
    <property type="entry name" value="F1F0 ATP synthase subunit A"/>
    <property type="match status" value="1"/>
</dbReference>